<name>RAB1C_ARATH</name>
<sequence>MSYAYLFKYIIIGDTGVGKSCLLLQFTDKRFQPVHDLTIGVEFGARMITIDNKPIKLQIWDTAGQESFRSITRSYYRGAAGALLVYDITRRETFNHLASWLEDARQHANANMTIMLIGNKCDLAHRRAVSTEEGEQFAKEHGLIFMEASAKTAQNVEEAFIKTAATIYKKIQDGVFDVSNESYGIKVGYGGIPGPSGGRDGSTSQGGGCCG</sequence>
<comment type="function">
    <text evidence="1">Intracellular vesicle trafficking and protein transport.</text>
</comment>
<comment type="subcellular location">
    <subcellularLocation>
        <location evidence="4">Cell membrane</location>
        <topology evidence="4">Lipid-anchor</topology>
        <orientation evidence="4">Cytoplasmic side</orientation>
    </subcellularLocation>
</comment>
<comment type="similarity">
    <text evidence="4">Belongs to the small GTPase superfamily. Rab family.</text>
</comment>
<proteinExistence type="evidence at protein level"/>
<keyword id="KW-0007">Acetylation</keyword>
<keyword id="KW-1003">Cell membrane</keyword>
<keyword id="KW-0342">GTP-binding</keyword>
<keyword id="KW-0449">Lipoprotein</keyword>
<keyword id="KW-0472">Membrane</keyword>
<keyword id="KW-0547">Nucleotide-binding</keyword>
<keyword id="KW-0636">Prenylation</keyword>
<keyword id="KW-0653">Protein transport</keyword>
<keyword id="KW-1185">Reference proteome</keyword>
<keyword id="KW-0813">Transport</keyword>
<reference key="1">
    <citation type="journal article" date="1997" name="Proc. Natl. Acad. Sci. U.S.A.">
        <title>A homolog of the mammalian GTPase Rab2 is present in Arabidopsis and is expressed predominantly in pollen grains and seedlings.</title>
        <authorList>
            <person name="Moore I."/>
            <person name="Diefenthal T."/>
            <person name="Zarsky V."/>
            <person name="Schell J."/>
            <person name="Palme K."/>
        </authorList>
    </citation>
    <scope>NUCLEOTIDE SEQUENCE [MRNA]</scope>
    <scope>TISSUE SPECIFICITY</scope>
    <source>
        <strain>cv. Columbia</strain>
    </source>
</reference>
<reference key="2">
    <citation type="journal article" date="1998" name="Nature">
        <title>Analysis of 1.9 Mb of contiguous sequence from chromosome 4 of Arabidopsis thaliana.</title>
        <authorList>
            <person name="Bevan M."/>
            <person name="Bancroft I."/>
            <person name="Bent E."/>
            <person name="Love K."/>
            <person name="Goodman H.M."/>
            <person name="Dean C."/>
            <person name="Bergkamp R."/>
            <person name="Dirkse W."/>
            <person name="van Staveren M."/>
            <person name="Stiekema W."/>
            <person name="Drost L."/>
            <person name="Ridley P."/>
            <person name="Hudson S.-A."/>
            <person name="Patel K."/>
            <person name="Murphy G."/>
            <person name="Piffanelli P."/>
            <person name="Wedler H."/>
            <person name="Wedler E."/>
            <person name="Wambutt R."/>
            <person name="Weitzenegger T."/>
            <person name="Pohl T."/>
            <person name="Terryn N."/>
            <person name="Gielen J."/>
            <person name="Villarroel R."/>
            <person name="De Clercq R."/>
            <person name="van Montagu M."/>
            <person name="Lecharny A."/>
            <person name="Aubourg S."/>
            <person name="Gy I."/>
            <person name="Kreis M."/>
            <person name="Lao N."/>
            <person name="Kavanagh T."/>
            <person name="Hempel S."/>
            <person name="Kotter P."/>
            <person name="Entian K.-D."/>
            <person name="Rieger M."/>
            <person name="Schaefer M."/>
            <person name="Funk B."/>
            <person name="Mueller-Auer S."/>
            <person name="Silvey M."/>
            <person name="James R."/>
            <person name="Monfort A."/>
            <person name="Pons A."/>
            <person name="Puigdomenech P."/>
            <person name="Douka A."/>
            <person name="Voukelatou E."/>
            <person name="Milioni D."/>
            <person name="Hatzopoulos P."/>
            <person name="Piravandi E."/>
            <person name="Obermaier B."/>
            <person name="Hilbert H."/>
            <person name="Duesterhoeft A."/>
            <person name="Moores T."/>
            <person name="Jones J.D.G."/>
            <person name="Eneva T."/>
            <person name="Palme K."/>
            <person name="Benes V."/>
            <person name="Rechmann S."/>
            <person name="Ansorge W."/>
            <person name="Cooke R."/>
            <person name="Berger C."/>
            <person name="Delseny M."/>
            <person name="Voet M."/>
            <person name="Volckaert G."/>
            <person name="Mewes H.-W."/>
            <person name="Klosterman S."/>
            <person name="Schueller C."/>
            <person name="Chalwatzis N."/>
        </authorList>
    </citation>
    <scope>NUCLEOTIDE SEQUENCE [LARGE SCALE GENOMIC DNA]</scope>
    <source>
        <strain>cv. Columbia</strain>
    </source>
</reference>
<reference key="3">
    <citation type="journal article" date="1999" name="Nature">
        <title>Sequence and analysis of chromosome 4 of the plant Arabidopsis thaliana.</title>
        <authorList>
            <person name="Mayer K.F.X."/>
            <person name="Schueller C."/>
            <person name="Wambutt R."/>
            <person name="Murphy G."/>
            <person name="Volckaert G."/>
            <person name="Pohl T."/>
            <person name="Duesterhoeft A."/>
            <person name="Stiekema W."/>
            <person name="Entian K.-D."/>
            <person name="Terryn N."/>
            <person name="Harris B."/>
            <person name="Ansorge W."/>
            <person name="Brandt P."/>
            <person name="Grivell L.A."/>
            <person name="Rieger M."/>
            <person name="Weichselgartner M."/>
            <person name="de Simone V."/>
            <person name="Obermaier B."/>
            <person name="Mache R."/>
            <person name="Mueller M."/>
            <person name="Kreis M."/>
            <person name="Delseny M."/>
            <person name="Puigdomenech P."/>
            <person name="Watson M."/>
            <person name="Schmidtheini T."/>
            <person name="Reichert B."/>
            <person name="Portetelle D."/>
            <person name="Perez-Alonso M."/>
            <person name="Boutry M."/>
            <person name="Bancroft I."/>
            <person name="Vos P."/>
            <person name="Hoheisel J."/>
            <person name="Zimmermann W."/>
            <person name="Wedler H."/>
            <person name="Ridley P."/>
            <person name="Langham S.-A."/>
            <person name="McCullagh B."/>
            <person name="Bilham L."/>
            <person name="Robben J."/>
            <person name="van der Schueren J."/>
            <person name="Grymonprez B."/>
            <person name="Chuang Y.-J."/>
            <person name="Vandenbussche F."/>
            <person name="Braeken M."/>
            <person name="Weltjens I."/>
            <person name="Voet M."/>
            <person name="Bastiaens I."/>
            <person name="Aert R."/>
            <person name="Defoor E."/>
            <person name="Weitzenegger T."/>
            <person name="Bothe G."/>
            <person name="Ramsperger U."/>
            <person name="Hilbert H."/>
            <person name="Braun M."/>
            <person name="Holzer E."/>
            <person name="Brandt A."/>
            <person name="Peters S."/>
            <person name="van Staveren M."/>
            <person name="Dirkse W."/>
            <person name="Mooijman P."/>
            <person name="Klein Lankhorst R."/>
            <person name="Rose M."/>
            <person name="Hauf J."/>
            <person name="Koetter P."/>
            <person name="Berneiser S."/>
            <person name="Hempel S."/>
            <person name="Feldpausch M."/>
            <person name="Lamberth S."/>
            <person name="Van den Daele H."/>
            <person name="De Keyser A."/>
            <person name="Buysshaert C."/>
            <person name="Gielen J."/>
            <person name="Villarroel R."/>
            <person name="De Clercq R."/>
            <person name="van Montagu M."/>
            <person name="Rogers J."/>
            <person name="Cronin A."/>
            <person name="Quail M.A."/>
            <person name="Bray-Allen S."/>
            <person name="Clark L."/>
            <person name="Doggett J."/>
            <person name="Hall S."/>
            <person name="Kay M."/>
            <person name="Lennard N."/>
            <person name="McLay K."/>
            <person name="Mayes R."/>
            <person name="Pettett A."/>
            <person name="Rajandream M.A."/>
            <person name="Lyne M."/>
            <person name="Benes V."/>
            <person name="Rechmann S."/>
            <person name="Borkova D."/>
            <person name="Bloecker H."/>
            <person name="Scharfe M."/>
            <person name="Grimm M."/>
            <person name="Loehnert T.-H."/>
            <person name="Dose S."/>
            <person name="de Haan M."/>
            <person name="Maarse A.C."/>
            <person name="Schaefer M."/>
            <person name="Mueller-Auer S."/>
            <person name="Gabel C."/>
            <person name="Fuchs M."/>
            <person name="Fartmann B."/>
            <person name="Granderath K."/>
            <person name="Dauner D."/>
            <person name="Herzl A."/>
            <person name="Neumann S."/>
            <person name="Argiriou A."/>
            <person name="Vitale D."/>
            <person name="Liguori R."/>
            <person name="Piravandi E."/>
            <person name="Massenet O."/>
            <person name="Quigley F."/>
            <person name="Clabauld G."/>
            <person name="Muendlein A."/>
            <person name="Felber R."/>
            <person name="Schnabl S."/>
            <person name="Hiller R."/>
            <person name="Schmidt W."/>
            <person name="Lecharny A."/>
            <person name="Aubourg S."/>
            <person name="Chefdor F."/>
            <person name="Cooke R."/>
            <person name="Berger C."/>
            <person name="Monfort A."/>
            <person name="Casacuberta E."/>
            <person name="Gibbons T."/>
            <person name="Weber N."/>
            <person name="Vandenbol M."/>
            <person name="Bargues M."/>
            <person name="Terol J."/>
            <person name="Torres A."/>
            <person name="Perez-Perez A."/>
            <person name="Purnelle B."/>
            <person name="Bent E."/>
            <person name="Johnson S."/>
            <person name="Tacon D."/>
            <person name="Jesse T."/>
            <person name="Heijnen L."/>
            <person name="Schwarz S."/>
            <person name="Scholler P."/>
            <person name="Heber S."/>
            <person name="Francs P."/>
            <person name="Bielke C."/>
            <person name="Frishman D."/>
            <person name="Haase D."/>
            <person name="Lemcke K."/>
            <person name="Mewes H.-W."/>
            <person name="Stocker S."/>
            <person name="Zaccaria P."/>
            <person name="Bevan M."/>
            <person name="Wilson R.K."/>
            <person name="de la Bastide M."/>
            <person name="Habermann K."/>
            <person name="Parnell L."/>
            <person name="Dedhia N."/>
            <person name="Gnoj L."/>
            <person name="Schutz K."/>
            <person name="Huang E."/>
            <person name="Spiegel L."/>
            <person name="Sekhon M."/>
            <person name="Murray J."/>
            <person name="Sheet P."/>
            <person name="Cordes M."/>
            <person name="Abu-Threideh J."/>
            <person name="Stoneking T."/>
            <person name="Kalicki J."/>
            <person name="Graves T."/>
            <person name="Harmon G."/>
            <person name="Edwards J."/>
            <person name="Latreille P."/>
            <person name="Courtney L."/>
            <person name="Cloud J."/>
            <person name="Abbott A."/>
            <person name="Scott K."/>
            <person name="Johnson D."/>
            <person name="Minx P."/>
            <person name="Bentley D."/>
            <person name="Fulton B."/>
            <person name="Miller N."/>
            <person name="Greco T."/>
            <person name="Kemp K."/>
            <person name="Kramer J."/>
            <person name="Fulton L."/>
            <person name="Mardis E."/>
            <person name="Dante M."/>
            <person name="Pepin K."/>
            <person name="Hillier L.W."/>
            <person name="Nelson J."/>
            <person name="Spieth J."/>
            <person name="Ryan E."/>
            <person name="Andrews S."/>
            <person name="Geisel C."/>
            <person name="Layman D."/>
            <person name="Du H."/>
            <person name="Ali J."/>
            <person name="Berghoff A."/>
            <person name="Jones K."/>
            <person name="Drone K."/>
            <person name="Cotton M."/>
            <person name="Joshu C."/>
            <person name="Antonoiu B."/>
            <person name="Zidanic M."/>
            <person name="Strong C."/>
            <person name="Sun H."/>
            <person name="Lamar B."/>
            <person name="Yordan C."/>
            <person name="Ma P."/>
            <person name="Zhong J."/>
            <person name="Preston R."/>
            <person name="Vil D."/>
            <person name="Shekher M."/>
            <person name="Matero A."/>
            <person name="Shah R."/>
            <person name="Swaby I.K."/>
            <person name="O'Shaughnessy A."/>
            <person name="Rodriguez M."/>
            <person name="Hoffman J."/>
            <person name="Till S."/>
            <person name="Granat S."/>
            <person name="Shohdy N."/>
            <person name="Hasegawa A."/>
            <person name="Hameed A."/>
            <person name="Lodhi M."/>
            <person name="Johnson A."/>
            <person name="Chen E."/>
            <person name="Marra M.A."/>
            <person name="Martienssen R."/>
            <person name="McCombie W.R."/>
        </authorList>
    </citation>
    <scope>NUCLEOTIDE SEQUENCE [LARGE SCALE GENOMIC DNA]</scope>
    <source>
        <strain>cv. Columbia</strain>
    </source>
</reference>
<reference key="4">
    <citation type="journal article" date="2017" name="Plant J.">
        <title>Araport11: a complete reannotation of the Arabidopsis thaliana reference genome.</title>
        <authorList>
            <person name="Cheng C.Y."/>
            <person name="Krishnakumar V."/>
            <person name="Chan A.P."/>
            <person name="Thibaud-Nissen F."/>
            <person name="Schobel S."/>
            <person name="Town C.D."/>
        </authorList>
    </citation>
    <scope>GENOME REANNOTATION</scope>
    <source>
        <strain>cv. Columbia</strain>
    </source>
</reference>
<reference key="5">
    <citation type="journal article" date="2003" name="Science">
        <title>Empirical analysis of transcriptional activity in the Arabidopsis genome.</title>
        <authorList>
            <person name="Yamada K."/>
            <person name="Lim J."/>
            <person name="Dale J.M."/>
            <person name="Chen H."/>
            <person name="Shinn P."/>
            <person name="Palm C.J."/>
            <person name="Southwick A.M."/>
            <person name="Wu H.C."/>
            <person name="Kim C.J."/>
            <person name="Nguyen M."/>
            <person name="Pham P.K."/>
            <person name="Cheuk R.F."/>
            <person name="Karlin-Newmann G."/>
            <person name="Liu S.X."/>
            <person name="Lam B."/>
            <person name="Sakano H."/>
            <person name="Wu T."/>
            <person name="Yu G."/>
            <person name="Miranda M."/>
            <person name="Quach H.L."/>
            <person name="Tripp M."/>
            <person name="Chang C.H."/>
            <person name="Lee J.M."/>
            <person name="Toriumi M.J."/>
            <person name="Chan M.M."/>
            <person name="Tang C.C."/>
            <person name="Onodera C.S."/>
            <person name="Deng J.M."/>
            <person name="Akiyama K."/>
            <person name="Ansari Y."/>
            <person name="Arakawa T."/>
            <person name="Banh J."/>
            <person name="Banno F."/>
            <person name="Bowser L."/>
            <person name="Brooks S.Y."/>
            <person name="Carninci P."/>
            <person name="Chao Q."/>
            <person name="Choy N."/>
            <person name="Enju A."/>
            <person name="Goldsmith A.D."/>
            <person name="Gurjal M."/>
            <person name="Hansen N.F."/>
            <person name="Hayashizaki Y."/>
            <person name="Johnson-Hopson C."/>
            <person name="Hsuan V.W."/>
            <person name="Iida K."/>
            <person name="Karnes M."/>
            <person name="Khan S."/>
            <person name="Koesema E."/>
            <person name="Ishida J."/>
            <person name="Jiang P.X."/>
            <person name="Jones T."/>
            <person name="Kawai J."/>
            <person name="Kamiya A."/>
            <person name="Meyers C."/>
            <person name="Nakajima M."/>
            <person name="Narusaka M."/>
            <person name="Seki M."/>
            <person name="Sakurai T."/>
            <person name="Satou M."/>
            <person name="Tamse R."/>
            <person name="Vaysberg M."/>
            <person name="Wallender E.K."/>
            <person name="Wong C."/>
            <person name="Yamamura Y."/>
            <person name="Yuan S."/>
            <person name="Shinozaki K."/>
            <person name="Davis R.W."/>
            <person name="Theologis A."/>
            <person name="Ecker J.R."/>
        </authorList>
    </citation>
    <scope>NUCLEOTIDE SEQUENCE [LARGE SCALE MRNA]</scope>
    <source>
        <strain>cv. Columbia</strain>
    </source>
</reference>
<reference key="6">
    <citation type="journal article" date="2003" name="Plant Physiol.">
        <title>Analysis of the small GTPase gene superfamily of Arabidopsis.</title>
        <authorList>
            <person name="Vernoud V."/>
            <person name="Horton A.C."/>
            <person name="Yang Z."/>
            <person name="Nielsen E."/>
        </authorList>
    </citation>
    <scope>GENE FAMILY</scope>
    <scope>NOMENCLATURE</scope>
</reference>
<reference key="7">
    <citation type="journal article" date="2012" name="Mol. Cell. Proteomics">
        <title>Comparative large-scale characterisation of plant vs. mammal proteins reveals similar and idiosyncratic N-alpha acetylation features.</title>
        <authorList>
            <person name="Bienvenut W.V."/>
            <person name="Sumpton D."/>
            <person name="Martinez A."/>
            <person name="Lilla S."/>
            <person name="Espagne C."/>
            <person name="Meinnel T."/>
            <person name="Giglione C."/>
        </authorList>
    </citation>
    <scope>ACETYLATION [LARGE SCALE ANALYSIS] AT SER-2</scope>
    <scope>CLEAVAGE OF INITIATOR METHIONINE [LARGE SCALE ANALYSIS]</scope>
    <scope>IDENTIFICATION BY MASS SPECTROMETRY [LARGE SCALE ANALYSIS]</scope>
</reference>
<organism>
    <name type="scientific">Arabidopsis thaliana</name>
    <name type="common">Mouse-ear cress</name>
    <dbReference type="NCBI Taxonomy" id="3702"/>
    <lineage>
        <taxon>Eukaryota</taxon>
        <taxon>Viridiplantae</taxon>
        <taxon>Streptophyta</taxon>
        <taxon>Embryophyta</taxon>
        <taxon>Tracheophyta</taxon>
        <taxon>Spermatophyta</taxon>
        <taxon>Magnoliopsida</taxon>
        <taxon>eudicotyledons</taxon>
        <taxon>Gunneridae</taxon>
        <taxon>Pentapetalae</taxon>
        <taxon>rosids</taxon>
        <taxon>malvids</taxon>
        <taxon>Brassicales</taxon>
        <taxon>Brassicaceae</taxon>
        <taxon>Camelineae</taxon>
        <taxon>Arabidopsis</taxon>
    </lineage>
</organism>
<gene>
    <name type="primary">RABB1C</name>
    <name type="synonym">RAB2</name>
    <name type="synonym">RAB2A</name>
    <name type="ordered locus">At4g17170</name>
    <name type="ORF">dl4620c</name>
    <name type="ORF">FCAALL.365</name>
</gene>
<dbReference type="EMBL" id="Y09314">
    <property type="protein sequence ID" value="CAA70498.1"/>
    <property type="molecule type" value="mRNA"/>
</dbReference>
<dbReference type="EMBL" id="Z97343">
    <property type="protein sequence ID" value="CAB45962.1"/>
    <property type="molecule type" value="Genomic_DNA"/>
</dbReference>
<dbReference type="EMBL" id="AL161545">
    <property type="protein sequence ID" value="CAB80988.1"/>
    <property type="molecule type" value="Genomic_DNA"/>
</dbReference>
<dbReference type="EMBL" id="CP002687">
    <property type="protein sequence ID" value="AEE83857.1"/>
    <property type="molecule type" value="Genomic_DNA"/>
</dbReference>
<dbReference type="EMBL" id="BT002513">
    <property type="protein sequence ID" value="AAO00873.1"/>
    <property type="molecule type" value="mRNA"/>
</dbReference>
<dbReference type="EMBL" id="BT006251">
    <property type="protein sequence ID" value="AAP13359.1"/>
    <property type="molecule type" value="mRNA"/>
</dbReference>
<dbReference type="PIR" id="E71440">
    <property type="entry name" value="E71440"/>
</dbReference>
<dbReference type="PIR" id="H85191">
    <property type="entry name" value="H85191"/>
</dbReference>
<dbReference type="RefSeq" id="NP_193450.1">
    <property type="nucleotide sequence ID" value="NM_117821.4"/>
</dbReference>
<dbReference type="SMR" id="P92963"/>
<dbReference type="BioGRID" id="12721">
    <property type="interactions" value="3"/>
</dbReference>
<dbReference type="FunCoup" id="P92963">
    <property type="interactions" value="3523"/>
</dbReference>
<dbReference type="IntAct" id="P92963">
    <property type="interactions" value="2"/>
</dbReference>
<dbReference type="MINT" id="P92963"/>
<dbReference type="STRING" id="3702.P92963"/>
<dbReference type="iPTMnet" id="P92963"/>
<dbReference type="PaxDb" id="3702-AT4G17170.1"/>
<dbReference type="ProteomicsDB" id="224870"/>
<dbReference type="EnsemblPlants" id="AT4G17170.1">
    <property type="protein sequence ID" value="AT4G17170.1"/>
    <property type="gene ID" value="AT4G17170"/>
</dbReference>
<dbReference type="GeneID" id="827428"/>
<dbReference type="Gramene" id="AT4G17170.1">
    <property type="protein sequence ID" value="AT4G17170.1"/>
    <property type="gene ID" value="AT4G17170"/>
</dbReference>
<dbReference type="KEGG" id="ath:AT4G17170"/>
<dbReference type="Araport" id="AT4G17170"/>
<dbReference type="TAIR" id="AT4G17170">
    <property type="gene designation" value="RABB1C"/>
</dbReference>
<dbReference type="eggNOG" id="KOG0098">
    <property type="taxonomic scope" value="Eukaryota"/>
</dbReference>
<dbReference type="HOGENOM" id="CLU_041217_23_1_1"/>
<dbReference type="InParanoid" id="P92963"/>
<dbReference type="OMA" id="TNATHAC"/>
<dbReference type="OrthoDB" id="1067587at2759"/>
<dbReference type="PhylomeDB" id="P92963"/>
<dbReference type="PRO" id="PR:P92963"/>
<dbReference type="Proteomes" id="UP000006548">
    <property type="component" value="Chromosome 4"/>
</dbReference>
<dbReference type="ExpressionAtlas" id="P92963">
    <property type="expression patterns" value="baseline and differential"/>
</dbReference>
<dbReference type="GO" id="GO:0000325">
    <property type="term" value="C:plant-type vacuole"/>
    <property type="evidence" value="ECO:0007005"/>
    <property type="project" value="TAIR"/>
</dbReference>
<dbReference type="GO" id="GO:0005886">
    <property type="term" value="C:plasma membrane"/>
    <property type="evidence" value="ECO:0007005"/>
    <property type="project" value="TAIR"/>
</dbReference>
<dbReference type="GO" id="GO:0005525">
    <property type="term" value="F:GTP binding"/>
    <property type="evidence" value="ECO:0007669"/>
    <property type="project" value="UniProtKB-KW"/>
</dbReference>
<dbReference type="GO" id="GO:0003924">
    <property type="term" value="F:GTPase activity"/>
    <property type="evidence" value="ECO:0007669"/>
    <property type="project" value="InterPro"/>
</dbReference>
<dbReference type="GO" id="GO:0006888">
    <property type="term" value="P:endoplasmic reticulum to Golgi vesicle-mediated transport"/>
    <property type="evidence" value="ECO:0000304"/>
    <property type="project" value="TAIR"/>
</dbReference>
<dbReference type="GO" id="GO:0015031">
    <property type="term" value="P:protein transport"/>
    <property type="evidence" value="ECO:0007669"/>
    <property type="project" value="UniProtKB-KW"/>
</dbReference>
<dbReference type="CDD" id="cd01866">
    <property type="entry name" value="Rab2"/>
    <property type="match status" value="1"/>
</dbReference>
<dbReference type="FunFam" id="3.40.50.300:FF:000263">
    <property type="entry name" value="Ras-related protein RABB1c"/>
    <property type="match status" value="1"/>
</dbReference>
<dbReference type="Gene3D" id="3.40.50.300">
    <property type="entry name" value="P-loop containing nucleotide triphosphate hydrolases"/>
    <property type="match status" value="1"/>
</dbReference>
<dbReference type="InterPro" id="IPR027417">
    <property type="entry name" value="P-loop_NTPase"/>
</dbReference>
<dbReference type="InterPro" id="IPR050209">
    <property type="entry name" value="Rab_GTPases_membrane_traffic"/>
</dbReference>
<dbReference type="InterPro" id="IPR005225">
    <property type="entry name" value="Small_GTP-bd"/>
</dbReference>
<dbReference type="InterPro" id="IPR001806">
    <property type="entry name" value="Small_GTPase"/>
</dbReference>
<dbReference type="NCBIfam" id="TIGR00231">
    <property type="entry name" value="small_GTP"/>
    <property type="match status" value="1"/>
</dbReference>
<dbReference type="PANTHER" id="PTHR47979">
    <property type="entry name" value="DRAB11-RELATED"/>
    <property type="match status" value="1"/>
</dbReference>
<dbReference type="Pfam" id="PF00071">
    <property type="entry name" value="Ras"/>
    <property type="match status" value="1"/>
</dbReference>
<dbReference type="PRINTS" id="PR00449">
    <property type="entry name" value="RASTRNSFRMNG"/>
</dbReference>
<dbReference type="SMART" id="SM00175">
    <property type="entry name" value="RAB"/>
    <property type="match status" value="1"/>
</dbReference>
<dbReference type="SMART" id="SM00176">
    <property type="entry name" value="RAN"/>
    <property type="match status" value="1"/>
</dbReference>
<dbReference type="SMART" id="SM00173">
    <property type="entry name" value="RAS"/>
    <property type="match status" value="1"/>
</dbReference>
<dbReference type="SMART" id="SM00174">
    <property type="entry name" value="RHO"/>
    <property type="match status" value="1"/>
</dbReference>
<dbReference type="SUPFAM" id="SSF52540">
    <property type="entry name" value="P-loop containing nucleoside triphosphate hydrolases"/>
    <property type="match status" value="1"/>
</dbReference>
<dbReference type="PROSITE" id="PS51419">
    <property type="entry name" value="RAB"/>
    <property type="match status" value="1"/>
</dbReference>
<protein>
    <recommendedName>
        <fullName>Ras-related protein RABB1c</fullName>
        <shortName>AtRABB1c</shortName>
    </recommendedName>
    <alternativeName>
        <fullName>Ras-related protein Rab2A</fullName>
        <shortName>AtRab2A</shortName>
    </alternativeName>
</protein>
<evidence type="ECO:0000250" key="1"/>
<evidence type="ECO:0000250" key="2">
    <source>
        <dbReference type="UniProtKB" id="P61019"/>
    </source>
</evidence>
<evidence type="ECO:0000250" key="3">
    <source>
        <dbReference type="UniProtKB" id="P62820"/>
    </source>
</evidence>
<evidence type="ECO:0000305" key="4"/>
<evidence type="ECO:0007744" key="5">
    <source>
    </source>
</evidence>
<accession>P92963</accession>
<feature type="initiator methionine" description="Removed" evidence="5">
    <location>
        <position position="1"/>
    </location>
</feature>
<feature type="chain" id="PRO_0000407356" description="Ras-related protein RABB1c">
    <location>
        <begin position="2"/>
        <end position="211"/>
    </location>
</feature>
<feature type="short sequence motif" description="Effector region" evidence="1">
    <location>
        <begin position="35"/>
        <end position="43"/>
    </location>
</feature>
<feature type="binding site" evidence="2">
    <location>
        <begin position="13"/>
        <end position="21"/>
    </location>
    <ligand>
        <name>GTP</name>
        <dbReference type="ChEBI" id="CHEBI:37565"/>
    </ligand>
</feature>
<feature type="binding site" evidence="3">
    <location>
        <begin position="61"/>
        <end position="65"/>
    </location>
    <ligand>
        <name>GTP</name>
        <dbReference type="ChEBI" id="CHEBI:37565"/>
    </ligand>
</feature>
<feature type="binding site" evidence="2">
    <location>
        <begin position="119"/>
        <end position="122"/>
    </location>
    <ligand>
        <name>GTP</name>
        <dbReference type="ChEBI" id="CHEBI:37565"/>
    </ligand>
</feature>
<feature type="binding site" evidence="2">
    <location>
        <begin position="149"/>
        <end position="151"/>
    </location>
    <ligand>
        <name>GTP</name>
        <dbReference type="ChEBI" id="CHEBI:37565"/>
    </ligand>
</feature>
<feature type="modified residue" description="N-acetylserine" evidence="5">
    <location>
        <position position="2"/>
    </location>
</feature>
<feature type="lipid moiety-binding region" description="S-geranylgeranyl cysteine" evidence="1">
    <location>
        <position position="209"/>
    </location>
</feature>
<feature type="lipid moiety-binding region" description="S-geranylgeranyl cysteine" evidence="1">
    <location>
        <position position="210"/>
    </location>
</feature>